<dbReference type="EC" id="1.13.11.65"/>
<dbReference type="EMBL" id="AM778534">
    <property type="protein sequence ID" value="CAO85888.1"/>
    <property type="molecule type" value="mRNA"/>
</dbReference>
<dbReference type="SMR" id="A8Y9I2"/>
<dbReference type="FunCoup" id="A8Y9I2">
    <property type="interactions" value="4"/>
</dbReference>
<dbReference type="KEGG" id="ag:CAO85888"/>
<dbReference type="InParanoid" id="A8Y9I2"/>
<dbReference type="BRENDA" id="1.13.11.65">
    <property type="organism ID" value="2389"/>
</dbReference>
<dbReference type="UniPathway" id="UPA00912"/>
<dbReference type="Proteomes" id="UP000504614">
    <property type="component" value="Unplaced"/>
</dbReference>
<dbReference type="GO" id="GO:0003834">
    <property type="term" value="F:beta-carotene 15,15'-dioxygenase activity"/>
    <property type="evidence" value="ECO:0007669"/>
    <property type="project" value="TreeGrafter"/>
</dbReference>
<dbReference type="GO" id="GO:0106422">
    <property type="term" value="F:carotenoid isomerooxygenase activity"/>
    <property type="evidence" value="ECO:0007669"/>
    <property type="project" value="UniProtKB-EC"/>
</dbReference>
<dbReference type="GO" id="GO:0046872">
    <property type="term" value="F:metal ion binding"/>
    <property type="evidence" value="ECO:0007669"/>
    <property type="project" value="UniProtKB-KW"/>
</dbReference>
<dbReference type="GO" id="GO:0004497">
    <property type="term" value="F:monooxygenase activity"/>
    <property type="evidence" value="ECO:0007669"/>
    <property type="project" value="UniProtKB-KW"/>
</dbReference>
<dbReference type="GO" id="GO:0016121">
    <property type="term" value="P:carotene catabolic process"/>
    <property type="evidence" value="ECO:0007669"/>
    <property type="project" value="TreeGrafter"/>
</dbReference>
<dbReference type="GO" id="GO:0042574">
    <property type="term" value="P:retinal metabolic process"/>
    <property type="evidence" value="ECO:0007669"/>
    <property type="project" value="TreeGrafter"/>
</dbReference>
<dbReference type="GO" id="GO:0042572">
    <property type="term" value="P:retinol metabolic process"/>
    <property type="evidence" value="ECO:0007669"/>
    <property type="project" value="UniProtKB-UniPathway"/>
</dbReference>
<dbReference type="InterPro" id="IPR004294">
    <property type="entry name" value="Carotenoid_Oase"/>
</dbReference>
<dbReference type="InterPro" id="IPR000595">
    <property type="entry name" value="cNMP-bd_dom"/>
</dbReference>
<dbReference type="PANTHER" id="PTHR10543">
    <property type="entry name" value="BETA-CAROTENE DIOXYGENASE"/>
    <property type="match status" value="1"/>
</dbReference>
<dbReference type="PANTHER" id="PTHR10543:SF24">
    <property type="entry name" value="CAROTENOID ISOMEROOXYGENASE"/>
    <property type="match status" value="1"/>
</dbReference>
<dbReference type="Pfam" id="PF03055">
    <property type="entry name" value="RPE65"/>
    <property type="match status" value="1"/>
</dbReference>
<feature type="chain" id="PRO_0000424158" description="Carotenoid isomerooxygenase">
    <location>
        <begin position="1"/>
        <end position="513"/>
    </location>
</feature>
<feature type="binding site" evidence="1">
    <location>
        <position position="184"/>
    </location>
    <ligand>
        <name>Fe cation</name>
        <dbReference type="ChEBI" id="CHEBI:24875"/>
        <note>catalytic</note>
    </ligand>
</feature>
<feature type="binding site" evidence="1">
    <location>
        <position position="242"/>
    </location>
    <ligand>
        <name>Fe cation</name>
        <dbReference type="ChEBI" id="CHEBI:24875"/>
        <note>catalytic</note>
    </ligand>
</feature>
<feature type="binding site" evidence="1">
    <location>
        <position position="312"/>
    </location>
    <ligand>
        <name>Fe cation</name>
        <dbReference type="ChEBI" id="CHEBI:24875"/>
        <note>catalytic</note>
    </ligand>
</feature>
<feature type="binding site" evidence="1">
    <location>
        <position position="503"/>
    </location>
    <ligand>
        <name>Fe cation</name>
        <dbReference type="ChEBI" id="CHEBI:24875"/>
        <note>catalytic</note>
    </ligand>
</feature>
<comment type="function">
    <text evidence="2">Catalyzes the oxidative cleavage at the 15,15'-double bond of carotenoids and the simultaneous all-trans to 11-cis isomerization of one cleavage product. Carotenoids like 11-cis retinal can promote visual pigment biogenesis in the dark. Essential for the biosynthesis of the 3-hydroxyretinal chromophore of rhodopsin from zeaxanthin and for proper photoreceptor development.</text>
</comment>
<comment type="catalytic activity">
    <reaction evidence="2">
        <text>all-trans-zeaxanthin + O2 = (3R)-11-cis-3-hydroxyretinal + (3R)-all-trans-3-hydroxyretinal</text>
        <dbReference type="Rhea" id="RHEA:33931"/>
        <dbReference type="ChEBI" id="CHEBI:15379"/>
        <dbReference type="ChEBI" id="CHEBI:27547"/>
        <dbReference type="ChEBI" id="CHEBI:52228"/>
        <dbReference type="ChEBI" id="CHEBI:66898"/>
        <dbReference type="EC" id="1.13.11.65"/>
    </reaction>
</comment>
<comment type="cofactor">
    <cofactor evidence="1">
        <name>Fe(2+)</name>
        <dbReference type="ChEBI" id="CHEBI:29033"/>
    </cofactor>
    <text evidence="1">Binds 1 Fe(2+) ion per subunit.</text>
</comment>
<comment type="pathway">
    <text>Cofactor metabolism; retinol metabolism.</text>
</comment>
<comment type="similarity">
    <text evidence="3">Belongs to the carotenoid oxygenase family.</text>
</comment>
<evidence type="ECO:0000250" key="1"/>
<evidence type="ECO:0000269" key="2">
    <source>
    </source>
</evidence>
<evidence type="ECO:0000305" key="3"/>
<sequence length="513" mass="57839">MAVHQEKLYPNCDSGVWLRSCEEEVTEPLEGTITGEIPSWLQGSLLRNGPGSLKVGSMRFEHLFDSSALLHRFAINDGSVTYQCRFLQSNTFKKNRAAERIVVTEFGTRAVPDPCHTIFDRVAALFKPGESLSDNAMISLYPFGDEIYAFTEGPVIHRIDPETLDTLERRNLMDSVSLVNHTSHPHVMPNGDVYNLGMSIVQGRLKHVIVKFPYTEKGDMFAKAHIVANMSPRWPLHPAYMHTFGITENYFVIVEQPLSVSLLTMVKSQPSNEPLASSLHWYPNHETHIVLLSRRDGKEVKRYRTEPLFYLHIINAYEHDGVLVVDLCAYKDAKAIDAMYINAIETMQSNADYAEWFRGRPKRLELPLNATNCSRIEPRLLAQLGCETPRIHYDLYNGRPYRYFYAISSDVDAANPGTIIKVDTKTGETKTWCDTNCYPSEPIFVPAPGATEEDDGVILSALVWGGAGAHCRRVALLVLEARGLRELARATFCAPSPVPKCLHGWFLPRRTQL</sequence>
<name>NINAB_GALME</name>
<keyword id="KW-0408">Iron</keyword>
<keyword id="KW-0479">Metal-binding</keyword>
<keyword id="KW-0503">Monooxygenase</keyword>
<keyword id="KW-0560">Oxidoreductase</keyword>
<keyword id="KW-1185">Reference proteome</keyword>
<accession>A8Y9I2</accession>
<protein>
    <recommendedName>
        <fullName>Carotenoid isomerooxygenase</fullName>
        <ecNumber>1.13.11.65</ecNumber>
    </recommendedName>
    <alternativeName>
        <fullName>Beta-carotene 15,15'-monooxygenase and retinoid isomerase</fullName>
    </alternativeName>
    <alternativeName>
        <fullName>Beta-carotene dioxygenase and retinoid isomerase</fullName>
    </alternativeName>
    <alternativeName>
        <fullName>Neither inactivation nor afterpotential mutant B</fullName>
    </alternativeName>
</protein>
<proteinExistence type="evidence at protein level"/>
<organism>
    <name type="scientific">Galleria mellonella</name>
    <name type="common">Greater wax moth</name>
    <dbReference type="NCBI Taxonomy" id="7137"/>
    <lineage>
        <taxon>Eukaryota</taxon>
        <taxon>Metazoa</taxon>
        <taxon>Ecdysozoa</taxon>
        <taxon>Arthropoda</taxon>
        <taxon>Hexapoda</taxon>
        <taxon>Insecta</taxon>
        <taxon>Pterygota</taxon>
        <taxon>Neoptera</taxon>
        <taxon>Endopterygota</taxon>
        <taxon>Lepidoptera</taxon>
        <taxon>Glossata</taxon>
        <taxon>Ditrysia</taxon>
        <taxon>Pyraloidea</taxon>
        <taxon>Pyralidae</taxon>
        <taxon>Galleriinae</taxon>
        <taxon>Galleria</taxon>
    </lineage>
</organism>
<reference key="1">
    <citation type="journal article" date="2008" name="Proc. Natl. Acad. Sci. U.S.A.">
        <title>NinaB combines carotenoid oxygenase and retinoid isomerase activity in a single polypeptide.</title>
        <authorList>
            <person name="Oberhauser V."/>
            <person name="Voolstra O."/>
            <person name="Bangert A."/>
            <person name="von Lintig J."/>
            <person name="Vogt K."/>
        </authorList>
    </citation>
    <scope>NUCLEOTIDE SEQUENCE [MRNA]</scope>
    <scope>FUNCTION</scope>
    <scope>CATALYTIC ACTIVITY</scope>
    <source>
        <tissue>Pupae</tissue>
    </source>
</reference>
<gene>
    <name type="primary">ninaB</name>
</gene>